<comment type="function">
    <text evidence="2 3">Critical regulator of endosomal recycling of numerous surface proteins, including integrins, signaling receptor and channels (By similarity). Binds to NPxY sequences in the cytoplasmic tails of target cargos (By similarity). Associates with retriever and CCC complexes to prevent lysosomal degradation and promote cell surface recycling of numerous cargos such as integrins ITGB1, ITGB5 and their associated alpha subunits (By similarity). Also required for maintenance of normal cell surface levels of APP and LRP1 (By similarity). Interacts with membranes containing phosphatidylinositol 3-phosphate (PtdIns(3P)) (By similarity).</text>
</comment>
<comment type="subunit">
    <text evidence="2 3">Monomer (By similarity). Interacts with APP (via cytoplasmic YXNPXY motif) (By similarity). Interacts with KIF1B (By similarity). Interacts with the C-termini of P-selectin, PTC, LDLR, VLDLR, LRP1 and LRP8 (By similarity). Interacts with KRIT1 (via N-terminus) (By similarity). Interacts with HRAS (By similarity). Interacts with ITGB1 and ITGB5 (via NPxY motif) (By similarity). Interacts with CCDC22 and CCDC93; the interaction associates SNX17 with the CCC complex (By similarity). Interacts (via C-terminus) with VPS26C and VPS35L; the interactions are direct and associate SNX17 with the retriever complex (By similarity).</text>
</comment>
<comment type="subcellular location">
    <subcellularLocation>
        <location evidence="2">Cytoplasm</location>
    </subcellularLocation>
    <subcellularLocation>
        <location evidence="2">Early endosome</location>
    </subcellularLocation>
    <subcellularLocation>
        <location evidence="2">Cytoplasmic vesicle membrane</location>
        <topology evidence="2">Peripheral membrane protein</topology>
        <orientation evidence="2">Cytoplasmic side</orientation>
    </subcellularLocation>
</comment>
<comment type="domain">
    <text evidence="2">The PX domain mediates specific binding to phosphatidylinositol 3-phosphate (PtdIns(P3)). Required for association with endosomes.</text>
</comment>
<comment type="domain">
    <text evidence="2">The PTB-like F3 module within the FERM-like domain mediates cargo recognition via their NPxY sequences, while the F1 module (Ras-associating) is responsible for interaction with membrane-bound HRAS.</text>
</comment>
<comment type="similarity">
    <text evidence="7">Belongs to the sorting nexin family.</text>
</comment>
<organism>
    <name type="scientific">Bos taurus</name>
    <name type="common">Bovine</name>
    <dbReference type="NCBI Taxonomy" id="9913"/>
    <lineage>
        <taxon>Eukaryota</taxon>
        <taxon>Metazoa</taxon>
        <taxon>Chordata</taxon>
        <taxon>Craniata</taxon>
        <taxon>Vertebrata</taxon>
        <taxon>Euteleostomi</taxon>
        <taxon>Mammalia</taxon>
        <taxon>Eutheria</taxon>
        <taxon>Laurasiatheria</taxon>
        <taxon>Artiodactyla</taxon>
        <taxon>Ruminantia</taxon>
        <taxon>Pecora</taxon>
        <taxon>Bovidae</taxon>
        <taxon>Bovinae</taxon>
        <taxon>Bos</taxon>
    </lineage>
</organism>
<reference key="1">
    <citation type="journal article" date="2005" name="BMC Genomics">
        <title>Characterization of 954 bovine full-CDS cDNA sequences.</title>
        <authorList>
            <person name="Harhay G.P."/>
            <person name="Sonstegard T.S."/>
            <person name="Keele J.W."/>
            <person name="Heaton M.P."/>
            <person name="Clawson M.L."/>
            <person name="Snelling W.M."/>
            <person name="Wiedmann R.T."/>
            <person name="Van Tassell C.P."/>
            <person name="Smith T.P.L."/>
        </authorList>
    </citation>
    <scope>NUCLEOTIDE SEQUENCE [LARGE SCALE MRNA]</scope>
</reference>
<reference key="2">
    <citation type="submission" date="2006-06" db="EMBL/GenBank/DDBJ databases">
        <authorList>
            <consortium name="NIH - Mammalian Gene Collection (MGC) project"/>
        </authorList>
    </citation>
    <scope>NUCLEOTIDE SEQUENCE [LARGE SCALE MRNA]</scope>
    <source>
        <strain>Hereford</strain>
        <tissue>Thalamus</tissue>
    </source>
</reference>
<dbReference type="EMBL" id="BT020692">
    <property type="protein sequence ID" value="AAX08709.1"/>
    <property type="molecule type" value="mRNA"/>
</dbReference>
<dbReference type="EMBL" id="BC118249">
    <property type="protein sequence ID" value="AAI18250.1"/>
    <property type="molecule type" value="mRNA"/>
</dbReference>
<dbReference type="RefSeq" id="NP_001015638.1">
    <property type="nucleotide sequence ID" value="NM_001015638.1"/>
</dbReference>
<dbReference type="BMRB" id="Q5EA77"/>
<dbReference type="SMR" id="Q5EA77"/>
<dbReference type="FunCoup" id="Q5EA77">
    <property type="interactions" value="3540"/>
</dbReference>
<dbReference type="STRING" id="9913.ENSBTAP00000025998"/>
<dbReference type="PaxDb" id="9913-ENSBTAP00000025998"/>
<dbReference type="GeneID" id="529972"/>
<dbReference type="KEGG" id="bta:529972"/>
<dbReference type="CTD" id="9784"/>
<dbReference type="VEuPathDB" id="HostDB:ENSBTAG00000019515"/>
<dbReference type="eggNOG" id="KOG3784">
    <property type="taxonomic scope" value="Eukaryota"/>
</dbReference>
<dbReference type="HOGENOM" id="CLU_041342_1_0_1"/>
<dbReference type="InParanoid" id="Q5EA77"/>
<dbReference type="OMA" id="RRHCVGV"/>
<dbReference type="OrthoDB" id="5772781at2759"/>
<dbReference type="TreeFam" id="TF318398"/>
<dbReference type="Proteomes" id="UP000009136">
    <property type="component" value="Chromosome 11"/>
</dbReference>
<dbReference type="Bgee" id="ENSBTAG00000019515">
    <property type="expression patterns" value="Expressed in granulosa cell and 104 other cell types or tissues"/>
</dbReference>
<dbReference type="GO" id="GO:0005737">
    <property type="term" value="C:cytoplasm"/>
    <property type="evidence" value="ECO:0000250"/>
    <property type="project" value="AgBase"/>
</dbReference>
<dbReference type="GO" id="GO:0031410">
    <property type="term" value="C:cytoplasmic vesicle"/>
    <property type="evidence" value="ECO:0000250"/>
    <property type="project" value="UniProtKB"/>
</dbReference>
<dbReference type="GO" id="GO:0030659">
    <property type="term" value="C:cytoplasmic vesicle membrane"/>
    <property type="evidence" value="ECO:0007669"/>
    <property type="project" value="UniProtKB-SubCell"/>
</dbReference>
<dbReference type="GO" id="GO:0005829">
    <property type="term" value="C:cytosol"/>
    <property type="evidence" value="ECO:0000250"/>
    <property type="project" value="UniProtKB"/>
</dbReference>
<dbReference type="GO" id="GO:0005769">
    <property type="term" value="C:early endosome"/>
    <property type="evidence" value="ECO:0000250"/>
    <property type="project" value="AgBase"/>
</dbReference>
<dbReference type="GO" id="GO:0005768">
    <property type="term" value="C:endosome"/>
    <property type="evidence" value="ECO:0000250"/>
    <property type="project" value="UniProtKB"/>
</dbReference>
<dbReference type="GO" id="GO:0005794">
    <property type="term" value="C:Golgi apparatus"/>
    <property type="evidence" value="ECO:0000250"/>
    <property type="project" value="AgBase"/>
</dbReference>
<dbReference type="GO" id="GO:0035091">
    <property type="term" value="F:phosphatidylinositol binding"/>
    <property type="evidence" value="ECO:0000250"/>
    <property type="project" value="UniProtKB"/>
</dbReference>
<dbReference type="GO" id="GO:0032456">
    <property type="term" value="P:endocytic recycling"/>
    <property type="evidence" value="ECO:0000250"/>
    <property type="project" value="UniProtKB"/>
</dbReference>
<dbReference type="GO" id="GO:0006886">
    <property type="term" value="P:intracellular protein transport"/>
    <property type="evidence" value="ECO:0000318"/>
    <property type="project" value="GO_Central"/>
</dbReference>
<dbReference type="GO" id="GO:0006898">
    <property type="term" value="P:receptor-mediated endocytosis"/>
    <property type="evidence" value="ECO:0000250"/>
    <property type="project" value="AgBase"/>
</dbReference>
<dbReference type="GO" id="GO:0007165">
    <property type="term" value="P:signal transduction"/>
    <property type="evidence" value="ECO:0007669"/>
    <property type="project" value="InterPro"/>
</dbReference>
<dbReference type="CDD" id="cd13337">
    <property type="entry name" value="FERM-like_C_SNX17"/>
    <property type="match status" value="1"/>
</dbReference>
<dbReference type="CDD" id="cd16121">
    <property type="entry name" value="FERM_F1_SNX17"/>
    <property type="match status" value="1"/>
</dbReference>
<dbReference type="CDD" id="cd06885">
    <property type="entry name" value="PX_SNX17_31"/>
    <property type="match status" value="1"/>
</dbReference>
<dbReference type="FunFam" id="1.20.80.60:FF:000001">
    <property type="entry name" value="Sorting nexin-17 isoform1"/>
    <property type="match status" value="1"/>
</dbReference>
<dbReference type="FunFam" id="2.30.29.30:FF:000145">
    <property type="entry name" value="Sorting nexin-17 isoform1"/>
    <property type="match status" value="1"/>
</dbReference>
<dbReference type="FunFam" id="3.10.20.90:FF:000094">
    <property type="entry name" value="Sorting nexin-17 isoform1"/>
    <property type="match status" value="1"/>
</dbReference>
<dbReference type="FunFam" id="3.30.1520.10:FF:000008">
    <property type="entry name" value="Sorting nexin-17 isoform1"/>
    <property type="match status" value="1"/>
</dbReference>
<dbReference type="Gene3D" id="1.20.80.60">
    <property type="match status" value="1"/>
</dbReference>
<dbReference type="Gene3D" id="3.10.20.90">
    <property type="entry name" value="Phosphatidylinositol 3-kinase Catalytic Subunit, Chain A, domain 1"/>
    <property type="match status" value="1"/>
</dbReference>
<dbReference type="Gene3D" id="3.30.1520.10">
    <property type="entry name" value="Phox-like domain"/>
    <property type="match status" value="1"/>
</dbReference>
<dbReference type="Gene3D" id="2.30.29.30">
    <property type="entry name" value="Pleckstrin-homology domain (PH domain)/Phosphotyrosine-binding domain (PTB)"/>
    <property type="match status" value="1"/>
</dbReference>
<dbReference type="InterPro" id="IPR011993">
    <property type="entry name" value="PH-like_dom_sf"/>
</dbReference>
<dbReference type="InterPro" id="IPR001683">
    <property type="entry name" value="PX_dom"/>
</dbReference>
<dbReference type="InterPro" id="IPR036871">
    <property type="entry name" value="PX_dom_sf"/>
</dbReference>
<dbReference type="InterPro" id="IPR000159">
    <property type="entry name" value="RA_dom"/>
</dbReference>
<dbReference type="InterPro" id="IPR048763">
    <property type="entry name" value="SNX17-31_FERM_F1"/>
</dbReference>
<dbReference type="InterPro" id="IPR048767">
    <property type="entry name" value="SNX17-31_FERM_F2"/>
</dbReference>
<dbReference type="InterPro" id="IPR040842">
    <property type="entry name" value="SNX17/31_FERM"/>
</dbReference>
<dbReference type="InterPro" id="IPR037836">
    <property type="entry name" value="SNX17_FERM-like_dom"/>
</dbReference>
<dbReference type="InterPro" id="IPR028666">
    <property type="entry name" value="SNX17_FERM_N"/>
</dbReference>
<dbReference type="PANTHER" id="PTHR12431">
    <property type="entry name" value="SORTING NEXIN 17 AND 27"/>
    <property type="match status" value="1"/>
</dbReference>
<dbReference type="PANTHER" id="PTHR12431:SF16">
    <property type="entry name" value="SORTING NEXIN-17"/>
    <property type="match status" value="1"/>
</dbReference>
<dbReference type="Pfam" id="PF00787">
    <property type="entry name" value="PX"/>
    <property type="match status" value="1"/>
</dbReference>
<dbReference type="Pfam" id="PF21273">
    <property type="entry name" value="SNX17-27-31_F1_FERM"/>
    <property type="match status" value="1"/>
</dbReference>
<dbReference type="Pfam" id="PF21271">
    <property type="entry name" value="SNX17-31_F2_FERM"/>
    <property type="match status" value="1"/>
</dbReference>
<dbReference type="Pfam" id="PF18116">
    <property type="entry name" value="SNX17_FERM_C"/>
    <property type="match status" value="1"/>
</dbReference>
<dbReference type="SMART" id="SM00312">
    <property type="entry name" value="PX"/>
    <property type="match status" value="1"/>
</dbReference>
<dbReference type="SUPFAM" id="SSF64268">
    <property type="entry name" value="PX domain"/>
    <property type="match status" value="1"/>
</dbReference>
<dbReference type="PROSITE" id="PS50195">
    <property type="entry name" value="PX"/>
    <property type="match status" value="1"/>
</dbReference>
<dbReference type="PROSITE" id="PS50200">
    <property type="entry name" value="RA"/>
    <property type="match status" value="1"/>
</dbReference>
<sequence>MHFSIPETESRSGDSGGSAYVAYNIHVNGVLHCRVRYSQLLGLHEQLRKEYGANVLPAFPPKKLFSLTPAEVEQRREQLEKYMQAVRQDPLLGSSETFNSFLRRAQQETQQVPTEEVSLEVLLSNGQKVLVNVLTSDQTEDVLEAVAAKLDLPDDLIGYFSLFLVREKEDGAFSFVRKLQEFELPYVSVTSLRSQEYKIVLRKSYWDSAYDDDVMENRVGLNLLYAQTVADIERGWILVTKEQHRQLKSLQEKVSKKEFLRLAQTLRHYGYLRFDACVADFPEKDCPVVVSAGNSELSLQLRLPGQQLREGSFRVTRMRCWRVTSSVPLPSGGTSSPGRGRGEVRLELAFEYLMSKDRLQWVTITSPQAIMMSICLQSMVDELMVKKSGGSIRKMLRRRVGGTLRRSDSQQAVKSPPLLESPDASRESMVKLSSKLSAVSLRGIGTPGTDASASDVHGNFAFEGIGDEDL</sequence>
<feature type="chain" id="PRO_0000238952" description="Sorting nexin-17">
    <location>
        <begin position="1"/>
        <end position="470"/>
    </location>
</feature>
<feature type="domain" description="PX" evidence="4">
    <location>
        <begin position="1"/>
        <end position="109"/>
    </location>
</feature>
<feature type="domain" description="Ras-associating" evidence="5">
    <location>
        <begin position="115"/>
        <end position="206"/>
    </location>
</feature>
<feature type="region of interest" description="FERM-like" evidence="1">
    <location>
        <begin position="115"/>
        <end position="432"/>
    </location>
</feature>
<feature type="region of interest" description="PTB-like F3 module" evidence="1">
    <location>
        <begin position="270"/>
        <end position="432"/>
    </location>
</feature>
<feature type="region of interest" description="Disordered" evidence="6">
    <location>
        <begin position="400"/>
        <end position="426"/>
    </location>
</feature>
<feature type="binding site" evidence="1">
    <location>
        <position position="36"/>
    </location>
    <ligand>
        <name>a 1,2-diacyl-sn-glycero-3-phospho-(1D-myo-inositol-3-phosphate)</name>
        <dbReference type="ChEBI" id="CHEBI:58088"/>
    </ligand>
</feature>
<feature type="binding site" evidence="1">
    <location>
        <position position="38"/>
    </location>
    <ligand>
        <name>a 1,2-diacyl-sn-glycero-3-phospho-(1D-myo-inositol-3-phosphate)</name>
        <dbReference type="ChEBI" id="CHEBI:58088"/>
    </ligand>
</feature>
<feature type="binding site" evidence="1">
    <location>
        <position position="62"/>
    </location>
    <ligand>
        <name>a 1,2-diacyl-sn-glycero-3-phospho-(1D-myo-inositol-3-phosphate)</name>
        <dbReference type="ChEBI" id="CHEBI:58088"/>
    </ligand>
</feature>
<feature type="binding site" evidence="1">
    <location>
        <position position="75"/>
    </location>
    <ligand>
        <name>a 1,2-diacyl-sn-glycero-3-phospho-(1D-myo-inositol-3-phosphate)</name>
        <dbReference type="ChEBI" id="CHEBI:58088"/>
    </ligand>
</feature>
<feature type="modified residue" description="Phosphoserine" evidence="2">
    <location>
        <position position="336"/>
    </location>
</feature>
<feature type="modified residue" description="Phosphoserine" evidence="2">
    <location>
        <position position="407"/>
    </location>
</feature>
<feature type="modified residue" description="Phosphoserine" evidence="2">
    <location>
        <position position="409"/>
    </location>
</feature>
<feature type="modified residue" description="Phosphoserine" evidence="2">
    <location>
        <position position="415"/>
    </location>
</feature>
<feature type="modified residue" description="Phosphoserine" evidence="2">
    <location>
        <position position="421"/>
    </location>
</feature>
<feature type="modified residue" description="Phosphoserine" evidence="2">
    <location>
        <position position="437"/>
    </location>
</feature>
<feature type="modified residue" description="Phosphoserine" evidence="2">
    <location>
        <position position="440"/>
    </location>
</feature>
<gene>
    <name type="primary">SNX17</name>
</gene>
<name>SNX17_BOVIN</name>
<protein>
    <recommendedName>
        <fullName>Sorting nexin-17</fullName>
    </recommendedName>
</protein>
<proteinExistence type="evidence at transcript level"/>
<keyword id="KW-0963">Cytoplasm</keyword>
<keyword id="KW-0968">Cytoplasmic vesicle</keyword>
<keyword id="KW-0967">Endosome</keyword>
<keyword id="KW-0446">Lipid-binding</keyword>
<keyword id="KW-0472">Membrane</keyword>
<keyword id="KW-0597">Phosphoprotein</keyword>
<keyword id="KW-0653">Protein transport</keyword>
<keyword id="KW-1185">Reference proteome</keyword>
<keyword id="KW-0813">Transport</keyword>
<evidence type="ECO:0000250" key="1"/>
<evidence type="ECO:0000250" key="2">
    <source>
        <dbReference type="UniProtKB" id="Q15036"/>
    </source>
</evidence>
<evidence type="ECO:0000250" key="3">
    <source>
        <dbReference type="UniProtKB" id="Q8BVL3"/>
    </source>
</evidence>
<evidence type="ECO:0000255" key="4">
    <source>
        <dbReference type="PROSITE-ProRule" id="PRU00147"/>
    </source>
</evidence>
<evidence type="ECO:0000255" key="5">
    <source>
        <dbReference type="PROSITE-ProRule" id="PRU00166"/>
    </source>
</evidence>
<evidence type="ECO:0000256" key="6">
    <source>
        <dbReference type="SAM" id="MobiDB-lite"/>
    </source>
</evidence>
<evidence type="ECO:0000305" key="7"/>
<accession>Q5EA77</accession>
<accession>Q17QP3</accession>